<evidence type="ECO:0000255" key="1">
    <source>
        <dbReference type="HAMAP-Rule" id="MF_01405"/>
    </source>
</evidence>
<reference key="1">
    <citation type="journal article" date="2007" name="PLoS Genet.">
        <title>Patterns and implications of gene gain and loss in the evolution of Prochlorococcus.</title>
        <authorList>
            <person name="Kettler G.C."/>
            <person name="Martiny A.C."/>
            <person name="Huang K."/>
            <person name="Zucker J."/>
            <person name="Coleman M.L."/>
            <person name="Rodrigue S."/>
            <person name="Chen F."/>
            <person name="Lapidus A."/>
            <person name="Ferriera S."/>
            <person name="Johnson J."/>
            <person name="Steglich C."/>
            <person name="Church G.M."/>
            <person name="Richardson P."/>
            <person name="Chisholm S.W."/>
        </authorList>
    </citation>
    <scope>NUCLEOTIDE SEQUENCE [LARGE SCALE GENOMIC DNA]</scope>
    <source>
        <strain>NATL2A</strain>
    </source>
</reference>
<organism>
    <name type="scientific">Prochlorococcus marinus (strain NATL2A)</name>
    <dbReference type="NCBI Taxonomy" id="59920"/>
    <lineage>
        <taxon>Bacteria</taxon>
        <taxon>Bacillati</taxon>
        <taxon>Cyanobacteriota</taxon>
        <taxon>Cyanophyceae</taxon>
        <taxon>Synechococcales</taxon>
        <taxon>Prochlorococcaceae</taxon>
        <taxon>Prochlorococcus</taxon>
    </lineage>
</organism>
<dbReference type="EC" id="3.6.1.66" evidence="1"/>
<dbReference type="EMBL" id="CP000095">
    <property type="protein sequence ID" value="AAZ59133.1"/>
    <property type="molecule type" value="Genomic_DNA"/>
</dbReference>
<dbReference type="SMR" id="Q46H95"/>
<dbReference type="STRING" id="59920.PMN2A_1645"/>
<dbReference type="KEGG" id="pmn:PMN2A_1645"/>
<dbReference type="HOGENOM" id="CLU_082080_0_2_3"/>
<dbReference type="OrthoDB" id="9807456at2"/>
<dbReference type="PhylomeDB" id="Q46H95"/>
<dbReference type="Proteomes" id="UP000002535">
    <property type="component" value="Chromosome"/>
</dbReference>
<dbReference type="GO" id="GO:0005829">
    <property type="term" value="C:cytosol"/>
    <property type="evidence" value="ECO:0007669"/>
    <property type="project" value="TreeGrafter"/>
</dbReference>
<dbReference type="GO" id="GO:0035870">
    <property type="term" value="F:dITP diphosphatase activity"/>
    <property type="evidence" value="ECO:0007669"/>
    <property type="project" value="RHEA"/>
</dbReference>
<dbReference type="GO" id="GO:0036220">
    <property type="term" value="F:ITP diphosphatase activity"/>
    <property type="evidence" value="ECO:0007669"/>
    <property type="project" value="UniProtKB-EC"/>
</dbReference>
<dbReference type="GO" id="GO:0046872">
    <property type="term" value="F:metal ion binding"/>
    <property type="evidence" value="ECO:0007669"/>
    <property type="project" value="UniProtKB-KW"/>
</dbReference>
<dbReference type="GO" id="GO:0000166">
    <property type="term" value="F:nucleotide binding"/>
    <property type="evidence" value="ECO:0007669"/>
    <property type="project" value="UniProtKB-KW"/>
</dbReference>
<dbReference type="GO" id="GO:0017111">
    <property type="term" value="F:ribonucleoside triphosphate phosphatase activity"/>
    <property type="evidence" value="ECO:0007669"/>
    <property type="project" value="InterPro"/>
</dbReference>
<dbReference type="GO" id="GO:0036222">
    <property type="term" value="F:XTP diphosphatase activity"/>
    <property type="evidence" value="ECO:0007669"/>
    <property type="project" value="RHEA"/>
</dbReference>
<dbReference type="GO" id="GO:0009117">
    <property type="term" value="P:nucleotide metabolic process"/>
    <property type="evidence" value="ECO:0007669"/>
    <property type="project" value="UniProtKB-KW"/>
</dbReference>
<dbReference type="GO" id="GO:0009146">
    <property type="term" value="P:purine nucleoside triphosphate catabolic process"/>
    <property type="evidence" value="ECO:0007669"/>
    <property type="project" value="UniProtKB-UniRule"/>
</dbReference>
<dbReference type="CDD" id="cd00515">
    <property type="entry name" value="HAM1"/>
    <property type="match status" value="1"/>
</dbReference>
<dbReference type="FunFam" id="3.90.950.10:FF:000001">
    <property type="entry name" value="dITP/XTP pyrophosphatase"/>
    <property type="match status" value="1"/>
</dbReference>
<dbReference type="Gene3D" id="3.90.950.10">
    <property type="match status" value="1"/>
</dbReference>
<dbReference type="HAMAP" id="MF_01405">
    <property type="entry name" value="Non_canon_purine_NTPase"/>
    <property type="match status" value="1"/>
</dbReference>
<dbReference type="InterPro" id="IPR020922">
    <property type="entry name" value="dITP/XTP_pyrophosphatase"/>
</dbReference>
<dbReference type="InterPro" id="IPR029001">
    <property type="entry name" value="ITPase-like_fam"/>
</dbReference>
<dbReference type="InterPro" id="IPR002637">
    <property type="entry name" value="RdgB/HAM1"/>
</dbReference>
<dbReference type="NCBIfam" id="TIGR00042">
    <property type="entry name" value="RdgB/HAM1 family non-canonical purine NTP pyrophosphatase"/>
    <property type="match status" value="1"/>
</dbReference>
<dbReference type="PANTHER" id="PTHR11067:SF9">
    <property type="entry name" value="INOSINE TRIPHOSPHATE PYROPHOSPHATASE"/>
    <property type="match status" value="1"/>
</dbReference>
<dbReference type="PANTHER" id="PTHR11067">
    <property type="entry name" value="INOSINE TRIPHOSPHATE PYROPHOSPHATASE/HAM1 PROTEIN"/>
    <property type="match status" value="1"/>
</dbReference>
<dbReference type="Pfam" id="PF01725">
    <property type="entry name" value="Ham1p_like"/>
    <property type="match status" value="1"/>
</dbReference>
<dbReference type="SUPFAM" id="SSF52972">
    <property type="entry name" value="ITPase-like"/>
    <property type="match status" value="1"/>
</dbReference>
<proteinExistence type="inferred from homology"/>
<sequence length="196" mass="21276">MDNVPLVIASGNKGKIGEFKKLLDDFPIDLLTQPVGFEIEETGSTFMENARIKAIAVSQATGNLSLADDSGLSVEALGGAPGIYSSRYASSDKQRIEKLLAELKPFSNRKAKFECALCIASGEKVLIEVSGFCEGLITFFPKGQNGFGYDPIFEVSGLGETYAEMDHEKKKHIGHRGNAFKLLIPKLKQLLGSMKK</sequence>
<protein>
    <recommendedName>
        <fullName evidence="1">dITP/XTP pyrophosphatase</fullName>
        <ecNumber evidence="1">3.6.1.66</ecNumber>
    </recommendedName>
    <alternativeName>
        <fullName evidence="1">Non-canonical purine NTP pyrophosphatase</fullName>
    </alternativeName>
    <alternativeName>
        <fullName evidence="1">Non-standard purine NTP pyrophosphatase</fullName>
    </alternativeName>
    <alternativeName>
        <fullName evidence="1">Nucleoside-triphosphate diphosphatase</fullName>
    </alternativeName>
    <alternativeName>
        <fullName evidence="1">Nucleoside-triphosphate pyrophosphatase</fullName>
        <shortName evidence="1">NTPase</shortName>
    </alternativeName>
</protein>
<keyword id="KW-0378">Hydrolase</keyword>
<keyword id="KW-0460">Magnesium</keyword>
<keyword id="KW-0479">Metal-binding</keyword>
<keyword id="KW-0546">Nucleotide metabolism</keyword>
<keyword id="KW-0547">Nucleotide-binding</keyword>
<keyword id="KW-1185">Reference proteome</keyword>
<gene>
    <name type="ordered locus">PMN2A_1645</name>
</gene>
<comment type="function">
    <text evidence="1">Pyrophosphatase that catalyzes the hydrolysis of nucleoside triphosphates to their monophosphate derivatives, with a high preference for the non-canonical purine nucleotides XTP (xanthosine triphosphate), dITP (deoxyinosine triphosphate) and ITP. Seems to function as a house-cleaning enzyme that removes non-canonical purine nucleotides from the nucleotide pool, thus preventing their incorporation into DNA/RNA and avoiding chromosomal lesions.</text>
</comment>
<comment type="catalytic activity">
    <reaction evidence="1">
        <text>XTP + H2O = XMP + diphosphate + H(+)</text>
        <dbReference type="Rhea" id="RHEA:28610"/>
        <dbReference type="ChEBI" id="CHEBI:15377"/>
        <dbReference type="ChEBI" id="CHEBI:15378"/>
        <dbReference type="ChEBI" id="CHEBI:33019"/>
        <dbReference type="ChEBI" id="CHEBI:57464"/>
        <dbReference type="ChEBI" id="CHEBI:61314"/>
        <dbReference type="EC" id="3.6.1.66"/>
    </reaction>
</comment>
<comment type="catalytic activity">
    <reaction evidence="1">
        <text>dITP + H2O = dIMP + diphosphate + H(+)</text>
        <dbReference type="Rhea" id="RHEA:28342"/>
        <dbReference type="ChEBI" id="CHEBI:15377"/>
        <dbReference type="ChEBI" id="CHEBI:15378"/>
        <dbReference type="ChEBI" id="CHEBI:33019"/>
        <dbReference type="ChEBI" id="CHEBI:61194"/>
        <dbReference type="ChEBI" id="CHEBI:61382"/>
        <dbReference type="EC" id="3.6.1.66"/>
    </reaction>
</comment>
<comment type="catalytic activity">
    <reaction evidence="1">
        <text>ITP + H2O = IMP + diphosphate + H(+)</text>
        <dbReference type="Rhea" id="RHEA:29399"/>
        <dbReference type="ChEBI" id="CHEBI:15377"/>
        <dbReference type="ChEBI" id="CHEBI:15378"/>
        <dbReference type="ChEBI" id="CHEBI:33019"/>
        <dbReference type="ChEBI" id="CHEBI:58053"/>
        <dbReference type="ChEBI" id="CHEBI:61402"/>
        <dbReference type="EC" id="3.6.1.66"/>
    </reaction>
</comment>
<comment type="cofactor">
    <cofactor evidence="1">
        <name>Mg(2+)</name>
        <dbReference type="ChEBI" id="CHEBI:18420"/>
    </cofactor>
    <text evidence="1">Binds 1 Mg(2+) ion per subunit.</text>
</comment>
<comment type="subunit">
    <text evidence="1">Homodimer.</text>
</comment>
<comment type="similarity">
    <text evidence="1">Belongs to the HAM1 NTPase family.</text>
</comment>
<name>IXTPA_PROMT</name>
<feature type="chain" id="PRO_1000184582" description="dITP/XTP pyrophosphatase">
    <location>
        <begin position="1"/>
        <end position="196"/>
    </location>
</feature>
<feature type="active site" description="Proton acceptor" evidence="1">
    <location>
        <position position="69"/>
    </location>
</feature>
<feature type="binding site" evidence="1">
    <location>
        <begin position="10"/>
        <end position="15"/>
    </location>
    <ligand>
        <name>substrate</name>
    </ligand>
</feature>
<feature type="binding site" evidence="1">
    <location>
        <position position="40"/>
    </location>
    <ligand>
        <name>Mg(2+)</name>
        <dbReference type="ChEBI" id="CHEBI:18420"/>
    </ligand>
</feature>
<feature type="binding site" evidence="1">
    <location>
        <position position="69"/>
    </location>
    <ligand>
        <name>Mg(2+)</name>
        <dbReference type="ChEBI" id="CHEBI:18420"/>
    </ligand>
</feature>
<feature type="binding site" evidence="1">
    <location>
        <position position="70"/>
    </location>
    <ligand>
        <name>substrate</name>
    </ligand>
</feature>
<feature type="binding site" evidence="1">
    <location>
        <begin position="147"/>
        <end position="150"/>
    </location>
    <ligand>
        <name>substrate</name>
    </ligand>
</feature>
<feature type="binding site" evidence="1">
    <location>
        <position position="170"/>
    </location>
    <ligand>
        <name>substrate</name>
    </ligand>
</feature>
<feature type="binding site" evidence="1">
    <location>
        <begin position="175"/>
        <end position="176"/>
    </location>
    <ligand>
        <name>substrate</name>
    </ligand>
</feature>
<accession>Q46H95</accession>